<evidence type="ECO:0000250" key="1"/>
<evidence type="ECO:0000250" key="2">
    <source>
        <dbReference type="UniProtKB" id="Q8N3X1"/>
    </source>
</evidence>
<evidence type="ECO:0000255" key="3">
    <source>
        <dbReference type="PROSITE-ProRule" id="PRU00224"/>
    </source>
</evidence>
<evidence type="ECO:0000256" key="4">
    <source>
        <dbReference type="SAM" id="MobiDB-lite"/>
    </source>
</evidence>
<evidence type="ECO:0000269" key="5">
    <source>
    </source>
</evidence>
<evidence type="ECO:0000269" key="6">
    <source>
    </source>
</evidence>
<evidence type="ECO:0000303" key="7">
    <source>
    </source>
</evidence>
<evidence type="ECO:0000303" key="8">
    <source>
    </source>
</evidence>
<evidence type="ECO:0000305" key="9"/>
<evidence type="ECO:0007744" key="10">
    <source>
    </source>
</evidence>
<evidence type="ECO:0007744" key="11">
    <source>
    </source>
</evidence>
<evidence type="ECO:0007744" key="12">
    <source>
    </source>
</evidence>
<evidence type="ECO:0007744" key="13">
    <source>
    </source>
</evidence>
<protein>
    <recommendedName>
        <fullName>Formin-binding protein 4</fullName>
    </recommendedName>
    <alternativeName>
        <fullName>Formin-binding protein 30</fullName>
    </alternativeName>
</protein>
<organism>
    <name type="scientific">Mus musculus</name>
    <name type="common">Mouse</name>
    <dbReference type="NCBI Taxonomy" id="10090"/>
    <lineage>
        <taxon>Eukaryota</taxon>
        <taxon>Metazoa</taxon>
        <taxon>Chordata</taxon>
        <taxon>Craniata</taxon>
        <taxon>Vertebrata</taxon>
        <taxon>Euteleostomi</taxon>
        <taxon>Mammalia</taxon>
        <taxon>Eutheria</taxon>
        <taxon>Euarchontoglires</taxon>
        <taxon>Glires</taxon>
        <taxon>Rodentia</taxon>
        <taxon>Myomorpha</taxon>
        <taxon>Muroidea</taxon>
        <taxon>Muridae</taxon>
        <taxon>Murinae</taxon>
        <taxon>Mus</taxon>
        <taxon>Mus</taxon>
    </lineage>
</organism>
<comment type="subunit">
    <text evidence="1">Binds FMN1. Interacts with the Arg/Gly-rich-flanked Pro-rich regions of KHDRBS1/SAM68. Arginine methylation in these regions has no effect on this binding (By similarity).</text>
</comment>
<comment type="alternative products">
    <event type="alternative splicing"/>
    <isoform>
        <id>Q6ZQ03-1</id>
        <name>1</name>
        <sequence type="displayed"/>
    </isoform>
    <isoform>
        <id>Q6ZQ03-2</id>
        <name>2</name>
        <sequence type="described" ref="VSP_026025 VSP_026026"/>
    </isoform>
    <isoform>
        <id>Q6ZQ03-3</id>
        <name>3</name>
        <sequence type="described" ref="VSP_029267 VSP_029268"/>
    </isoform>
</comment>
<comment type="tissue specificity">
    <text evidence="5 6">Ubiquitous. Highest levels in spleen and thymus.</text>
</comment>
<comment type="developmental stage">
    <text>First detected at 9 dpc.</text>
</comment>
<comment type="induction">
    <text evidence="5">Up-regulated by p53.</text>
</comment>
<comment type="domain">
    <text evidence="1">These WW domains interact with Arg/Gly-rich-flanked Pro-rich domains found in several WW domain-binding proteins (WBPs). The N-terminal WW domain has the greater ligand-binding ability (By similarity).</text>
</comment>
<comment type="sequence caution" evidence="9">
    <conflict type="erroneous initiation">
        <sequence resource="EMBL-CDS" id="AAF59410"/>
    </conflict>
</comment>
<comment type="sequence caution" evidence="9">
    <conflict type="erroneous initiation">
        <sequence resource="EMBL-CDS" id="BAC98073"/>
    </conflict>
</comment>
<comment type="sequence caution" evidence="9">
    <conflict type="frameshift">
        <sequence resource="EMBL-CDS" id="BAE37831"/>
    </conflict>
</comment>
<comment type="sequence caution" evidence="9">
    <conflict type="erroneous initiation">
        <sequence resource="EMBL-CDS" id="CAM20821"/>
    </conflict>
</comment>
<reference key="1">
    <citation type="journal article" date="1996" name="EMBO J.">
        <title>Formin binding proteins bear WWP/WW domains that bind proline-rich peptides and functionally resemble SH3 domains.</title>
        <authorList>
            <person name="Chan D.C."/>
            <person name="Bedford M.T."/>
            <person name="Leder P."/>
        </authorList>
    </citation>
    <scope>NUCLEOTIDE SEQUENCE [MRNA] (ISOFORM 1)</scope>
    <scope>INTERACTION WITH FMN1</scope>
    <source>
        <strain>FVB/NJ</strain>
        <tissue>Limb bud</tissue>
    </source>
</reference>
<reference key="2">
    <citation type="journal article" date="2000" name="J. Biol. Chem.">
        <title>A novel pro-Arg motif recognized by WW domains.</title>
        <authorList>
            <person name="Bedford M.T."/>
            <person name="Sarbassova D."/>
            <person name="Xu J."/>
            <person name="Leder P."/>
            <person name="Yaffe M.B."/>
        </authorList>
    </citation>
    <scope>NUCLEOTIDE SEQUENCE [MRNA] (ISOFORM 1)</scope>
    <scope>TISSUE SPECIFICITY</scope>
    <scope>INTERACTION WITH WW DOMAIN-BINDING PROTEINS</scope>
    <source>
        <strain>FVB/NJ</strain>
        <tissue>Embryo</tissue>
        <tissue>Fibroblast</tissue>
        <tissue>Limb bud</tissue>
    </source>
</reference>
<reference key="3">
    <citation type="journal article" date="2003" name="DNA Res.">
        <title>Prediction of the coding sequences of mouse homologues of KIAA gene: III. The complete nucleotide sequences of 500 mouse KIAA-homologous cDNAs identified by screening of terminal sequences of cDNA clones randomly sampled from size-fractionated libraries.</title>
        <authorList>
            <person name="Okazaki N."/>
            <person name="Kikuno R."/>
            <person name="Ohara R."/>
            <person name="Inamoto S."/>
            <person name="Koseki H."/>
            <person name="Hiraoka S."/>
            <person name="Saga Y."/>
            <person name="Nagase T."/>
            <person name="Ohara O."/>
            <person name="Koga H."/>
        </authorList>
    </citation>
    <scope>NUCLEOTIDE SEQUENCE [LARGE SCALE MRNA] (ISOFORM 1)</scope>
    <source>
        <tissue>Embryonic tail</tissue>
    </source>
</reference>
<reference key="4">
    <citation type="journal article" date="2005" name="Science">
        <title>The transcriptional landscape of the mammalian genome.</title>
        <authorList>
            <person name="Carninci P."/>
            <person name="Kasukawa T."/>
            <person name="Katayama S."/>
            <person name="Gough J."/>
            <person name="Frith M.C."/>
            <person name="Maeda N."/>
            <person name="Oyama R."/>
            <person name="Ravasi T."/>
            <person name="Lenhard B."/>
            <person name="Wells C."/>
            <person name="Kodzius R."/>
            <person name="Shimokawa K."/>
            <person name="Bajic V.B."/>
            <person name="Brenner S.E."/>
            <person name="Batalov S."/>
            <person name="Forrest A.R."/>
            <person name="Zavolan M."/>
            <person name="Davis M.J."/>
            <person name="Wilming L.G."/>
            <person name="Aidinis V."/>
            <person name="Allen J.E."/>
            <person name="Ambesi-Impiombato A."/>
            <person name="Apweiler R."/>
            <person name="Aturaliya R.N."/>
            <person name="Bailey T.L."/>
            <person name="Bansal M."/>
            <person name="Baxter L."/>
            <person name="Beisel K.W."/>
            <person name="Bersano T."/>
            <person name="Bono H."/>
            <person name="Chalk A.M."/>
            <person name="Chiu K.P."/>
            <person name="Choudhary V."/>
            <person name="Christoffels A."/>
            <person name="Clutterbuck D.R."/>
            <person name="Crowe M.L."/>
            <person name="Dalla E."/>
            <person name="Dalrymple B.P."/>
            <person name="de Bono B."/>
            <person name="Della Gatta G."/>
            <person name="di Bernardo D."/>
            <person name="Down T."/>
            <person name="Engstrom P."/>
            <person name="Fagiolini M."/>
            <person name="Faulkner G."/>
            <person name="Fletcher C.F."/>
            <person name="Fukushima T."/>
            <person name="Furuno M."/>
            <person name="Futaki S."/>
            <person name="Gariboldi M."/>
            <person name="Georgii-Hemming P."/>
            <person name="Gingeras T.R."/>
            <person name="Gojobori T."/>
            <person name="Green R.E."/>
            <person name="Gustincich S."/>
            <person name="Harbers M."/>
            <person name="Hayashi Y."/>
            <person name="Hensch T.K."/>
            <person name="Hirokawa N."/>
            <person name="Hill D."/>
            <person name="Huminiecki L."/>
            <person name="Iacono M."/>
            <person name="Ikeo K."/>
            <person name="Iwama A."/>
            <person name="Ishikawa T."/>
            <person name="Jakt M."/>
            <person name="Kanapin A."/>
            <person name="Katoh M."/>
            <person name="Kawasawa Y."/>
            <person name="Kelso J."/>
            <person name="Kitamura H."/>
            <person name="Kitano H."/>
            <person name="Kollias G."/>
            <person name="Krishnan S.P."/>
            <person name="Kruger A."/>
            <person name="Kummerfeld S.K."/>
            <person name="Kurochkin I.V."/>
            <person name="Lareau L.F."/>
            <person name="Lazarevic D."/>
            <person name="Lipovich L."/>
            <person name="Liu J."/>
            <person name="Liuni S."/>
            <person name="McWilliam S."/>
            <person name="Madan Babu M."/>
            <person name="Madera M."/>
            <person name="Marchionni L."/>
            <person name="Matsuda H."/>
            <person name="Matsuzawa S."/>
            <person name="Miki H."/>
            <person name="Mignone F."/>
            <person name="Miyake S."/>
            <person name="Morris K."/>
            <person name="Mottagui-Tabar S."/>
            <person name="Mulder N."/>
            <person name="Nakano N."/>
            <person name="Nakauchi H."/>
            <person name="Ng P."/>
            <person name="Nilsson R."/>
            <person name="Nishiguchi S."/>
            <person name="Nishikawa S."/>
            <person name="Nori F."/>
            <person name="Ohara O."/>
            <person name="Okazaki Y."/>
            <person name="Orlando V."/>
            <person name="Pang K.C."/>
            <person name="Pavan W.J."/>
            <person name="Pavesi G."/>
            <person name="Pesole G."/>
            <person name="Petrovsky N."/>
            <person name="Piazza S."/>
            <person name="Reed J."/>
            <person name="Reid J.F."/>
            <person name="Ring B.Z."/>
            <person name="Ringwald M."/>
            <person name="Rost B."/>
            <person name="Ruan Y."/>
            <person name="Salzberg S.L."/>
            <person name="Sandelin A."/>
            <person name="Schneider C."/>
            <person name="Schoenbach C."/>
            <person name="Sekiguchi K."/>
            <person name="Semple C.A."/>
            <person name="Seno S."/>
            <person name="Sessa L."/>
            <person name="Sheng Y."/>
            <person name="Shibata Y."/>
            <person name="Shimada H."/>
            <person name="Shimada K."/>
            <person name="Silva D."/>
            <person name="Sinclair B."/>
            <person name="Sperling S."/>
            <person name="Stupka E."/>
            <person name="Sugiura K."/>
            <person name="Sultana R."/>
            <person name="Takenaka Y."/>
            <person name="Taki K."/>
            <person name="Tammoja K."/>
            <person name="Tan S.L."/>
            <person name="Tang S."/>
            <person name="Taylor M.S."/>
            <person name="Tegner J."/>
            <person name="Teichmann S.A."/>
            <person name="Ueda H.R."/>
            <person name="van Nimwegen E."/>
            <person name="Verardo R."/>
            <person name="Wei C.L."/>
            <person name="Yagi K."/>
            <person name="Yamanishi H."/>
            <person name="Zabarovsky E."/>
            <person name="Zhu S."/>
            <person name="Zimmer A."/>
            <person name="Hide W."/>
            <person name="Bult C."/>
            <person name="Grimmond S.M."/>
            <person name="Teasdale R.D."/>
            <person name="Liu E.T."/>
            <person name="Brusic V."/>
            <person name="Quackenbush J."/>
            <person name="Wahlestedt C."/>
            <person name="Mattick J.S."/>
            <person name="Hume D.A."/>
            <person name="Kai C."/>
            <person name="Sasaki D."/>
            <person name="Tomaru Y."/>
            <person name="Fukuda S."/>
            <person name="Kanamori-Katayama M."/>
            <person name="Suzuki M."/>
            <person name="Aoki J."/>
            <person name="Arakawa T."/>
            <person name="Iida J."/>
            <person name="Imamura K."/>
            <person name="Itoh M."/>
            <person name="Kato T."/>
            <person name="Kawaji H."/>
            <person name="Kawagashira N."/>
            <person name="Kawashima T."/>
            <person name="Kojima M."/>
            <person name="Kondo S."/>
            <person name="Konno H."/>
            <person name="Nakano K."/>
            <person name="Ninomiya N."/>
            <person name="Nishio T."/>
            <person name="Okada M."/>
            <person name="Plessy C."/>
            <person name="Shibata K."/>
            <person name="Shiraki T."/>
            <person name="Suzuki S."/>
            <person name="Tagami M."/>
            <person name="Waki K."/>
            <person name="Watahiki A."/>
            <person name="Okamura-Oho Y."/>
            <person name="Suzuki H."/>
            <person name="Kawai J."/>
            <person name="Hayashizaki Y."/>
        </authorList>
    </citation>
    <scope>NUCLEOTIDE SEQUENCE [LARGE SCALE MRNA] (ISOFORM 1)</scope>
    <scope>NUCLEOTIDE SEQUENCE [LARGE SCALE MRNA] OF 3-1031 (ISOFORM 3)</scope>
    <source>
        <strain>C57BL/6J</strain>
        <tissue>Heart</tissue>
        <tissue>Spinal ganglion</tissue>
    </source>
</reference>
<reference key="5">
    <citation type="journal article" date="2009" name="PLoS Biol.">
        <title>Lineage-specific biology revealed by a finished genome assembly of the mouse.</title>
        <authorList>
            <person name="Church D.M."/>
            <person name="Goodstadt L."/>
            <person name="Hillier L.W."/>
            <person name="Zody M.C."/>
            <person name="Goldstein S."/>
            <person name="She X."/>
            <person name="Bult C.J."/>
            <person name="Agarwala R."/>
            <person name="Cherry J.L."/>
            <person name="DiCuccio M."/>
            <person name="Hlavina W."/>
            <person name="Kapustin Y."/>
            <person name="Meric P."/>
            <person name="Maglott D."/>
            <person name="Birtle Z."/>
            <person name="Marques A.C."/>
            <person name="Graves T."/>
            <person name="Zhou S."/>
            <person name="Teague B."/>
            <person name="Potamousis K."/>
            <person name="Churas C."/>
            <person name="Place M."/>
            <person name="Herschleb J."/>
            <person name="Runnheim R."/>
            <person name="Forrest D."/>
            <person name="Amos-Landgraf J."/>
            <person name="Schwartz D.C."/>
            <person name="Cheng Z."/>
            <person name="Lindblad-Toh K."/>
            <person name="Eichler E.E."/>
            <person name="Ponting C.P."/>
        </authorList>
    </citation>
    <scope>NUCLEOTIDE SEQUENCE [LARGE SCALE GENOMIC DNA] (ISOFORM 1)</scope>
    <source>
        <strain>C57BL/6J</strain>
    </source>
</reference>
<reference key="6">
    <citation type="journal article" date="1999" name="Cell Death Differ.">
        <title>WW domain-containing FBP-30 is regulated by p53.</title>
        <authorList>
            <person name="Depraetere V."/>
            <person name="Golstein P."/>
        </authorList>
    </citation>
    <scope>NUCLEOTIDE SEQUENCE [MRNA] OF 61-1031 (ISOFORM 2)</scope>
    <scope>TISSUE SPECIFICITY</scope>
    <scope>INDUCTION</scope>
    <source>
        <strain>C57BL/6J</strain>
        <tissue>Embryo</tissue>
        <tissue>Placenta</tissue>
        <tissue>Thymic lymphoma</tissue>
        <tissue>Thymus</tissue>
    </source>
</reference>
<reference key="7">
    <citation type="journal article" date="2007" name="Proc. Natl. Acad. Sci. U.S.A.">
        <title>Large-scale phosphorylation analysis of mouse liver.</title>
        <authorList>
            <person name="Villen J."/>
            <person name="Beausoleil S.A."/>
            <person name="Gerber S.A."/>
            <person name="Gygi S.P."/>
        </authorList>
    </citation>
    <scope>PHOSPHORYLATION [LARGE SCALE ANALYSIS] AT SER-440</scope>
    <scope>IDENTIFICATION BY MASS SPECTROMETRY [LARGE SCALE ANALYSIS]</scope>
    <source>
        <tissue>Liver</tissue>
    </source>
</reference>
<reference key="8">
    <citation type="journal article" date="2009" name="Mol. Cell. Proteomics">
        <title>Large scale localization of protein phosphorylation by use of electron capture dissociation mass spectrometry.</title>
        <authorList>
            <person name="Sweet S.M."/>
            <person name="Bailey C.M."/>
            <person name="Cunningham D.L."/>
            <person name="Heath J.K."/>
            <person name="Cooper H.J."/>
        </authorList>
    </citation>
    <scope>PHOSPHORYLATION [LARGE SCALE ANALYSIS] AT SER-19</scope>
    <scope>IDENTIFICATION BY MASS SPECTROMETRY [LARGE SCALE ANALYSIS]</scope>
    <source>
        <tissue>Embryonic fibroblast</tissue>
    </source>
</reference>
<reference key="9">
    <citation type="journal article" date="2010" name="Cell">
        <title>A tissue-specific atlas of mouse protein phosphorylation and expression.</title>
        <authorList>
            <person name="Huttlin E.L."/>
            <person name="Jedrychowski M.P."/>
            <person name="Elias J.E."/>
            <person name="Goswami T."/>
            <person name="Rad R."/>
            <person name="Beausoleil S.A."/>
            <person name="Villen J."/>
            <person name="Haas W."/>
            <person name="Sowa M.E."/>
            <person name="Gygi S.P."/>
        </authorList>
    </citation>
    <scope>PHOSPHORYLATION [LARGE SCALE ANALYSIS] AT SER-120; SER-125; SER-128; SER-435; SER-440; SER-443; SER-446; SER-450 AND SER-507</scope>
    <scope>IDENTIFICATION BY MASS SPECTROMETRY [LARGE SCALE ANALYSIS]</scope>
    <source>
        <tissue>Kidney</tissue>
        <tissue>Liver</tissue>
        <tissue>Lung</tissue>
        <tissue>Pancreas</tissue>
        <tissue>Spleen</tissue>
        <tissue>Testis</tissue>
    </source>
</reference>
<reference key="10">
    <citation type="journal article" date="2013" name="Mol. Cell">
        <title>SIRT5-mediated lysine desuccinylation impacts diverse metabolic pathways.</title>
        <authorList>
            <person name="Park J."/>
            <person name="Chen Y."/>
            <person name="Tishkoff D.X."/>
            <person name="Peng C."/>
            <person name="Tan M."/>
            <person name="Dai L."/>
            <person name="Xie Z."/>
            <person name="Zhang Y."/>
            <person name="Zwaans B.M."/>
            <person name="Skinner M.E."/>
            <person name="Lombard D.B."/>
            <person name="Zhao Y."/>
        </authorList>
    </citation>
    <scope>ACETYLATION [LARGE SCALE ANALYSIS] AT LYS-294</scope>
    <scope>IDENTIFICATION BY MASS SPECTROMETRY [LARGE SCALE ANALYSIS]</scope>
    <source>
        <tissue>Embryonic fibroblast</tissue>
    </source>
</reference>
<name>FNBP4_MOUSE</name>
<gene>
    <name type="primary">Fnbp4</name>
    <name type="synonym">Fbp30</name>
    <name type="synonym">Kiaa1014</name>
</gene>
<proteinExistence type="evidence at protein level"/>
<accession>Q6ZQ03</accession>
<accession>Q3TPA6</accession>
<accession>Q8BNC8</accession>
<accession>Q9JHC1</accession>
<dbReference type="EMBL" id="U40750">
    <property type="protein sequence ID" value="AAF59410.1"/>
    <property type="status" value="ALT_INIT"/>
    <property type="molecule type" value="mRNA"/>
</dbReference>
<dbReference type="EMBL" id="AK129263">
    <property type="protein sequence ID" value="BAC98073.2"/>
    <property type="status" value="ALT_INIT"/>
    <property type="molecule type" value="mRNA"/>
</dbReference>
<dbReference type="EMBL" id="AK084018">
    <property type="protein sequence ID" value="BAC39098.1"/>
    <property type="molecule type" value="mRNA"/>
</dbReference>
<dbReference type="EMBL" id="AK164543">
    <property type="protein sequence ID" value="BAE37831.1"/>
    <property type="status" value="ALT_FRAME"/>
    <property type="molecule type" value="mRNA"/>
</dbReference>
<dbReference type="EMBL" id="AL714026">
    <property type="protein sequence ID" value="CAM20821.1"/>
    <property type="status" value="ALT_INIT"/>
    <property type="molecule type" value="Genomic_DNA"/>
</dbReference>
<dbReference type="PIR" id="S64717">
    <property type="entry name" value="S64717"/>
</dbReference>
<dbReference type="RefSeq" id="NP_061298.1">
    <property type="nucleotide sequence ID" value="NM_018828.2"/>
</dbReference>
<dbReference type="BioGRID" id="207734">
    <property type="interactions" value="3"/>
</dbReference>
<dbReference type="ELM" id="Q6ZQ03"/>
<dbReference type="FunCoup" id="Q6ZQ03">
    <property type="interactions" value="2355"/>
</dbReference>
<dbReference type="IntAct" id="Q6ZQ03">
    <property type="interactions" value="1"/>
</dbReference>
<dbReference type="MINT" id="Q6ZQ03"/>
<dbReference type="STRING" id="10090.ENSMUSP00000013759"/>
<dbReference type="GlyGen" id="Q6ZQ03">
    <property type="glycosylation" value="7 sites, 1 O-linked glycan (3 sites)"/>
</dbReference>
<dbReference type="iPTMnet" id="Q6ZQ03"/>
<dbReference type="PhosphoSitePlus" id="Q6ZQ03"/>
<dbReference type="jPOST" id="Q6ZQ03"/>
<dbReference type="PaxDb" id="10090-ENSMUSP00000013759"/>
<dbReference type="PeptideAtlas" id="Q6ZQ03"/>
<dbReference type="ProteomicsDB" id="271704">
    <molecule id="Q6ZQ03-1"/>
</dbReference>
<dbReference type="ProteomicsDB" id="271705">
    <molecule id="Q6ZQ03-2"/>
</dbReference>
<dbReference type="ProteomicsDB" id="271706">
    <molecule id="Q6ZQ03-3"/>
</dbReference>
<dbReference type="Pumba" id="Q6ZQ03"/>
<dbReference type="DNASU" id="55935"/>
<dbReference type="GeneID" id="55935"/>
<dbReference type="KEGG" id="mmu:55935"/>
<dbReference type="UCSC" id="uc008ktb.1">
    <molecule id="Q6ZQ03-1"/>
    <property type="organism name" value="mouse"/>
</dbReference>
<dbReference type="AGR" id="MGI:1860513"/>
<dbReference type="CTD" id="23360"/>
<dbReference type="MGI" id="MGI:1860513">
    <property type="gene designation" value="Fnbp4"/>
</dbReference>
<dbReference type="eggNOG" id="ENOG502QTDD">
    <property type="taxonomic scope" value="Eukaryota"/>
</dbReference>
<dbReference type="InParanoid" id="Q6ZQ03"/>
<dbReference type="OrthoDB" id="2444812at2759"/>
<dbReference type="PhylomeDB" id="Q6ZQ03"/>
<dbReference type="TreeFam" id="TF331046"/>
<dbReference type="BioGRID-ORCS" id="55935">
    <property type="hits" value="9 hits in 76 CRISPR screens"/>
</dbReference>
<dbReference type="ChiTaRS" id="Fnbp4">
    <property type="organism name" value="mouse"/>
</dbReference>
<dbReference type="PRO" id="PR:Q6ZQ03"/>
<dbReference type="Proteomes" id="UP000000589">
    <property type="component" value="Unplaced"/>
</dbReference>
<dbReference type="RNAct" id="Q6ZQ03">
    <property type="molecule type" value="protein"/>
</dbReference>
<dbReference type="CDD" id="cd00201">
    <property type="entry name" value="WW"/>
    <property type="match status" value="2"/>
</dbReference>
<dbReference type="FunFam" id="2.20.70.10:FF:000056">
    <property type="entry name" value="Formin binding protein 4"/>
    <property type="match status" value="1"/>
</dbReference>
<dbReference type="FunFam" id="2.20.70.10:FF:000058">
    <property type="entry name" value="Formin binding protein 4"/>
    <property type="match status" value="1"/>
</dbReference>
<dbReference type="Gene3D" id="2.20.70.10">
    <property type="match status" value="2"/>
</dbReference>
<dbReference type="InterPro" id="IPR001202">
    <property type="entry name" value="WW_dom"/>
</dbReference>
<dbReference type="InterPro" id="IPR036020">
    <property type="entry name" value="WW_dom_sf"/>
</dbReference>
<dbReference type="InterPro" id="IPR053076">
    <property type="entry name" value="WW_domain_protein"/>
</dbReference>
<dbReference type="PANTHER" id="PTHR46697">
    <property type="entry name" value="FORMIN-BINDING PROTEIN 4"/>
    <property type="match status" value="1"/>
</dbReference>
<dbReference type="PANTHER" id="PTHR46697:SF1">
    <property type="entry name" value="FORMIN-BINDING PROTEIN 4"/>
    <property type="match status" value="1"/>
</dbReference>
<dbReference type="Pfam" id="PF00397">
    <property type="entry name" value="WW"/>
    <property type="match status" value="2"/>
</dbReference>
<dbReference type="SMART" id="SM00456">
    <property type="entry name" value="WW"/>
    <property type="match status" value="2"/>
</dbReference>
<dbReference type="SUPFAM" id="SSF51045">
    <property type="entry name" value="WW domain"/>
    <property type="match status" value="2"/>
</dbReference>
<dbReference type="PROSITE" id="PS01159">
    <property type="entry name" value="WW_DOMAIN_1"/>
    <property type="match status" value="1"/>
</dbReference>
<dbReference type="PROSITE" id="PS50020">
    <property type="entry name" value="WW_DOMAIN_2"/>
    <property type="match status" value="2"/>
</dbReference>
<feature type="chain" id="PRO_0000289864" description="Formin-binding protein 4">
    <location>
        <begin position="1"/>
        <end position="1031"/>
    </location>
</feature>
<feature type="domain" description="WW 1" evidence="3">
    <location>
        <begin position="218"/>
        <end position="252"/>
    </location>
</feature>
<feature type="domain" description="WW 2" evidence="3">
    <location>
        <begin position="603"/>
        <end position="637"/>
    </location>
</feature>
<feature type="region of interest" description="Disordered" evidence="4">
    <location>
        <begin position="1"/>
        <end position="102"/>
    </location>
</feature>
<feature type="region of interest" description="Disordered" evidence="4">
    <location>
        <begin position="116"/>
        <end position="143"/>
    </location>
</feature>
<feature type="region of interest" description="Disordered" evidence="4">
    <location>
        <begin position="166"/>
        <end position="205"/>
    </location>
</feature>
<feature type="region of interest" description="Disordered" evidence="4">
    <location>
        <begin position="355"/>
        <end position="518"/>
    </location>
</feature>
<feature type="region of interest" description="Disordered" evidence="4">
    <location>
        <begin position="629"/>
        <end position="681"/>
    </location>
</feature>
<feature type="region of interest" description="Disordered" evidence="4">
    <location>
        <begin position="712"/>
        <end position="813"/>
    </location>
</feature>
<feature type="region of interest" description="Disordered" evidence="4">
    <location>
        <begin position="900"/>
        <end position="994"/>
    </location>
</feature>
<feature type="compositionally biased region" description="Low complexity" evidence="4">
    <location>
        <begin position="41"/>
        <end position="73"/>
    </location>
</feature>
<feature type="compositionally biased region" description="Low complexity" evidence="4">
    <location>
        <begin position="83"/>
        <end position="92"/>
    </location>
</feature>
<feature type="compositionally biased region" description="Polar residues" evidence="4">
    <location>
        <begin position="134"/>
        <end position="143"/>
    </location>
</feature>
<feature type="compositionally biased region" description="Polar residues" evidence="4">
    <location>
        <begin position="190"/>
        <end position="203"/>
    </location>
</feature>
<feature type="compositionally biased region" description="Acidic residues" evidence="4">
    <location>
        <begin position="400"/>
        <end position="414"/>
    </location>
</feature>
<feature type="compositionally biased region" description="Basic and acidic residues" evidence="4">
    <location>
        <begin position="418"/>
        <end position="430"/>
    </location>
</feature>
<feature type="compositionally biased region" description="Polar residues" evidence="4">
    <location>
        <begin position="436"/>
        <end position="450"/>
    </location>
</feature>
<feature type="compositionally biased region" description="Basic residues" evidence="4">
    <location>
        <begin position="457"/>
        <end position="466"/>
    </location>
</feature>
<feature type="compositionally biased region" description="Low complexity" evidence="4">
    <location>
        <begin position="469"/>
        <end position="482"/>
    </location>
</feature>
<feature type="compositionally biased region" description="Basic and acidic residues" evidence="4">
    <location>
        <begin position="499"/>
        <end position="518"/>
    </location>
</feature>
<feature type="compositionally biased region" description="Basic and acidic residues" evidence="4">
    <location>
        <begin position="643"/>
        <end position="663"/>
    </location>
</feature>
<feature type="compositionally biased region" description="Polar residues" evidence="4">
    <location>
        <begin position="664"/>
        <end position="677"/>
    </location>
</feature>
<feature type="compositionally biased region" description="Pro residues" evidence="4">
    <location>
        <begin position="712"/>
        <end position="741"/>
    </location>
</feature>
<feature type="compositionally biased region" description="Acidic residues" evidence="4">
    <location>
        <begin position="742"/>
        <end position="757"/>
    </location>
</feature>
<feature type="compositionally biased region" description="Polar residues" evidence="4">
    <location>
        <begin position="771"/>
        <end position="794"/>
    </location>
</feature>
<feature type="compositionally biased region" description="Pro residues" evidence="4">
    <location>
        <begin position="913"/>
        <end position="939"/>
    </location>
</feature>
<feature type="compositionally biased region" description="Basic residues" evidence="4">
    <location>
        <begin position="943"/>
        <end position="955"/>
    </location>
</feature>
<feature type="compositionally biased region" description="Acidic residues" evidence="4">
    <location>
        <begin position="971"/>
        <end position="984"/>
    </location>
</feature>
<feature type="compositionally biased region" description="Basic and acidic residues" evidence="4">
    <location>
        <begin position="985"/>
        <end position="994"/>
    </location>
</feature>
<feature type="modified residue" description="Phosphoserine" evidence="11">
    <location>
        <position position="19"/>
    </location>
</feature>
<feature type="modified residue" description="Phosphoserine" evidence="12">
    <location>
        <position position="120"/>
    </location>
</feature>
<feature type="modified residue" description="Phosphoserine" evidence="12">
    <location>
        <position position="125"/>
    </location>
</feature>
<feature type="modified residue" description="Phosphoserine" evidence="12">
    <location>
        <position position="128"/>
    </location>
</feature>
<feature type="modified residue" description="Phosphothreonine" evidence="2">
    <location>
        <position position="176"/>
    </location>
</feature>
<feature type="modified residue" description="N6-acetyllysine" evidence="13">
    <location>
        <position position="294"/>
    </location>
</feature>
<feature type="modified residue" description="Phosphoserine" evidence="12">
    <location>
        <position position="435"/>
    </location>
</feature>
<feature type="modified residue" description="Phosphoserine" evidence="10 12">
    <location>
        <position position="440"/>
    </location>
</feature>
<feature type="modified residue" description="Phosphoserine" evidence="12">
    <location>
        <position position="443"/>
    </location>
</feature>
<feature type="modified residue" description="Phosphoserine" evidence="12">
    <location>
        <position position="446"/>
    </location>
</feature>
<feature type="modified residue" description="Phosphoserine" evidence="12">
    <location>
        <position position="450"/>
    </location>
</feature>
<feature type="modified residue" description="Phosphoserine" evidence="2">
    <location>
        <position position="472"/>
    </location>
</feature>
<feature type="modified residue" description="Phosphoserine" evidence="12">
    <location>
        <position position="507"/>
    </location>
</feature>
<feature type="modified residue" description="Phosphoserine" evidence="2">
    <location>
        <position position="516"/>
    </location>
</feature>
<feature type="modified residue" description="Phosphoserine" evidence="2">
    <location>
        <position position="977"/>
    </location>
</feature>
<feature type="modified residue" description="Phosphoserine" evidence="2">
    <location>
        <position position="978"/>
    </location>
</feature>
<feature type="modified residue" description="Phosphoserine" evidence="2">
    <location>
        <position position="979"/>
    </location>
</feature>
<feature type="cross-link" description="Glycyl lysine isopeptide (Lys-Gly) (interchain with G-Cter in SUMO1)" evidence="2">
    <location>
        <position position="305"/>
    </location>
</feature>
<feature type="cross-link" description="Glycyl lysine isopeptide (Lys-Gly) (interchain with G-Cter in SUMO2)" evidence="2">
    <location>
        <position position="339"/>
    </location>
</feature>
<feature type="cross-link" description="Glycyl lysine isopeptide (Lys-Gly) (interchain with G-Cter in SUMO1); alternate" evidence="2">
    <location>
        <position position="352"/>
    </location>
</feature>
<feature type="cross-link" description="Glycyl lysine isopeptide (Lys-Gly) (interchain with G-Cter in SUMO2); alternate" evidence="2">
    <location>
        <position position="352"/>
    </location>
</feature>
<feature type="cross-link" description="Glycyl lysine isopeptide (Lys-Gly) (interchain with G-Cter in SUMO1); alternate" evidence="2">
    <location>
        <position position="527"/>
    </location>
</feature>
<feature type="cross-link" description="Glycyl lysine isopeptide (Lys-Gly) (interchain with G-Cter in SUMO2); alternate" evidence="2">
    <location>
        <position position="527"/>
    </location>
</feature>
<feature type="splice variant" id="VSP_029267" description="In isoform 3." evidence="8">
    <original>DHRRYFYVNEQSGES</original>
    <variation>YALFSPSYLSPLTSQ</variation>
    <location>
        <begin position="616"/>
        <end position="630"/>
    </location>
</feature>
<feature type="splice variant" id="VSP_026025" description="In isoform 2." evidence="7">
    <original>DHRRYFY</original>
    <variation>TSGSNYS</variation>
    <location>
        <begin position="616"/>
        <end position="622"/>
    </location>
</feature>
<feature type="splice variant" id="VSP_026026" description="In isoform 2." evidence="7">
    <location>
        <begin position="623"/>
        <end position="1031"/>
    </location>
</feature>
<feature type="splice variant" id="VSP_029268" description="In isoform 3." evidence="8">
    <location>
        <begin position="631"/>
        <end position="1031"/>
    </location>
</feature>
<feature type="sequence conflict" description="In Ref. 6." evidence="9" ref="6">
    <original>S</original>
    <variation>T</variation>
    <location>
        <position position="68"/>
    </location>
</feature>
<feature type="sequence conflict" description="In Ref. 6." evidence="9" ref="6">
    <original>T</original>
    <variation>K</variation>
    <location>
        <position position="95"/>
    </location>
</feature>
<feature type="sequence conflict" description="In Ref. 6." evidence="9" ref="6">
    <original>T</original>
    <variation>P</variation>
    <location>
        <position position="99"/>
    </location>
</feature>
<feature type="sequence conflict" description="In Ref. 6." evidence="9" ref="6">
    <original>A</original>
    <variation>T</variation>
    <location>
        <position position="104"/>
    </location>
</feature>
<feature type="sequence conflict" description="In Ref. 3; BAC98073." evidence="9" ref="3">
    <original>P</original>
    <variation>S</variation>
    <location>
        <position position="192"/>
    </location>
</feature>
<feature type="sequence conflict" description="In Ref. 3; BAC98073." evidence="9" ref="3">
    <original>S</original>
    <variation>T</variation>
    <location>
        <position position="198"/>
    </location>
</feature>
<feature type="sequence conflict" description="In Ref. 3; BAC98073." evidence="9" ref="3">
    <original>K</original>
    <variation>Q</variation>
    <location>
        <position position="646"/>
    </location>
</feature>
<keyword id="KW-0007">Acetylation</keyword>
<keyword id="KW-0025">Alternative splicing</keyword>
<keyword id="KW-1017">Isopeptide bond</keyword>
<keyword id="KW-0597">Phosphoprotein</keyword>
<keyword id="KW-1185">Reference proteome</keyword>
<keyword id="KW-0677">Repeat</keyword>
<keyword id="KW-0832">Ubl conjugation</keyword>
<sequence>MMGKKSRAVPGRRPILQLSPPGPRSSTPGRDPDPDPDPEADSTAAATSQSAPAAATAAAATSPAVPASAAPEDSPSEDEQEVVVEVPNVVQNPPTPVMTTRPTAVKATGGLCLLGAYADSDDDESDVSEKTAQSKEANGNQATDIDSTLANFLAEIDAITAPQPAAPVVASAPPPTPPRPEPKEAATPALSPTASNGSDTAQTPGWHYDTQCSLAGVEIEMGDWQEVWDENTGCYYYWNTQTNEVTWELPQYLATQVQGLQHYQPSSVTGTEAAFVVNTDMYTKERTTAASSSKSGPVITKREVKKEVNEGIQALSNSEEERKGVAAALLAPLLPEGVKEEEERWRRKVICKEADPVSETKETSTASEETGPSIKPPEVMMDGTEDPSQEELCSVVQSGESEEEEEEEEQDTLELELALERKKAELRALEEGDGSVSGSSPRSDISQPASQDGVRRIMSKRGKWKMFVRATSPESTSRSSSKTGRDSPENGETAIGAEDSEKIDEISDKETEVEESSEKIKVQLAPKVEEEQDLKFQIGELANTLTSKFEFLGINRQSISNFHMLLLQTETRIADWREGALNGNYLKRKLQDAAEQLKQYEINATPKGWSCHWDRDHRRYFYVNEQSGESQWEFPDGEEEEESQTKEVRDESLPKLTVKDKTCTDPNSTESSENPTGSLCKESFSGQVSSSLMPLTPFWTLLQSNVPVLQPPLPLEMPPPPPPPPESPPPPPPPPPPPPPLEDGEIQEVEMEDEGSEEPPAPGTEEDTPLKPSTQTTAVTSQSLVDSTASSPPSNKAVKRKAPEMSTSVVQRSATIGSSPVLYSQSAIAAGHQAVGMAHQAVGMAHQAVSASHAAAAGVGHQARGMSLQSNYLGLAAAPALMSYAECSVPIGVTTPSLQPAQARGTMAAPAVVEPPPPPPPPPTPTPPPPPPAPKVPPPEKTRKGKKDKAKKSKTKMPSLVKKWQSIQRELDEEDNSSSSEEDRESTAQKRIEEWKQQQLVSGLAERNANFEALPEDWRARLKRRKMAPST</sequence>